<evidence type="ECO:0000255" key="1">
    <source>
        <dbReference type="HAMAP-Rule" id="MF_00819"/>
    </source>
</evidence>
<gene>
    <name evidence="1" type="primary">spoVG</name>
    <name type="ordered locus">Bcer98_0043</name>
</gene>
<organism>
    <name type="scientific">Bacillus cytotoxicus (strain DSM 22905 / CIP 110041 / 391-98 / NVH 391-98)</name>
    <dbReference type="NCBI Taxonomy" id="315749"/>
    <lineage>
        <taxon>Bacteria</taxon>
        <taxon>Bacillati</taxon>
        <taxon>Bacillota</taxon>
        <taxon>Bacilli</taxon>
        <taxon>Bacillales</taxon>
        <taxon>Bacillaceae</taxon>
        <taxon>Bacillus</taxon>
        <taxon>Bacillus cereus group</taxon>
    </lineage>
</organism>
<feature type="chain" id="PRO_1000083844" description="Putative septation protein SpoVG">
    <location>
        <begin position="1"/>
        <end position="97"/>
    </location>
</feature>
<dbReference type="EMBL" id="CP000764">
    <property type="protein sequence ID" value="ABS20418.1"/>
    <property type="molecule type" value="Genomic_DNA"/>
</dbReference>
<dbReference type="RefSeq" id="WP_000454042.1">
    <property type="nucleotide sequence ID" value="NC_009674.1"/>
</dbReference>
<dbReference type="SMR" id="A7GJW0"/>
<dbReference type="STRING" id="315749.Bcer98_0043"/>
<dbReference type="GeneID" id="66264900"/>
<dbReference type="KEGG" id="bcy:Bcer98_0043"/>
<dbReference type="eggNOG" id="COG2088">
    <property type="taxonomic scope" value="Bacteria"/>
</dbReference>
<dbReference type="HOGENOM" id="CLU_103669_2_1_9"/>
<dbReference type="OrthoDB" id="9796286at2"/>
<dbReference type="Proteomes" id="UP000002300">
    <property type="component" value="Chromosome"/>
</dbReference>
<dbReference type="GO" id="GO:0030436">
    <property type="term" value="P:asexual sporulation"/>
    <property type="evidence" value="ECO:0007669"/>
    <property type="project" value="UniProtKB-UniRule"/>
</dbReference>
<dbReference type="GO" id="GO:0000917">
    <property type="term" value="P:division septum assembly"/>
    <property type="evidence" value="ECO:0007669"/>
    <property type="project" value="UniProtKB-KW"/>
</dbReference>
<dbReference type="GO" id="GO:0030435">
    <property type="term" value="P:sporulation resulting in formation of a cellular spore"/>
    <property type="evidence" value="ECO:0007669"/>
    <property type="project" value="UniProtKB-KW"/>
</dbReference>
<dbReference type="FunFam" id="3.30.1120.40:FF:000001">
    <property type="entry name" value="Putative septation protein SpoVG"/>
    <property type="match status" value="1"/>
</dbReference>
<dbReference type="Gene3D" id="3.30.1120.40">
    <property type="entry name" value="Stage V sporulation protein G"/>
    <property type="match status" value="1"/>
</dbReference>
<dbReference type="HAMAP" id="MF_00819">
    <property type="entry name" value="SpoVG"/>
    <property type="match status" value="1"/>
</dbReference>
<dbReference type="InterPro" id="IPR007170">
    <property type="entry name" value="SpoVG"/>
</dbReference>
<dbReference type="InterPro" id="IPR036751">
    <property type="entry name" value="SpoVG_sf"/>
</dbReference>
<dbReference type="NCBIfam" id="NF009749">
    <property type="entry name" value="PRK13259.1"/>
    <property type="match status" value="1"/>
</dbReference>
<dbReference type="PANTHER" id="PTHR38429">
    <property type="entry name" value="SEPTATION PROTEIN SPOVG-RELATED"/>
    <property type="match status" value="1"/>
</dbReference>
<dbReference type="PANTHER" id="PTHR38429:SF1">
    <property type="entry name" value="SEPTATION PROTEIN SPOVG-RELATED"/>
    <property type="match status" value="1"/>
</dbReference>
<dbReference type="Pfam" id="PF04026">
    <property type="entry name" value="SpoVG"/>
    <property type="match status" value="1"/>
</dbReference>
<dbReference type="SUPFAM" id="SSF160537">
    <property type="entry name" value="SpoVG-like"/>
    <property type="match status" value="1"/>
</dbReference>
<comment type="function">
    <text evidence="1">Essential for sporulation. Interferes with or is a negative regulator of the pathway leading to asymmetric septation.</text>
</comment>
<comment type="similarity">
    <text evidence="1">Belongs to the SpoVG family.</text>
</comment>
<sequence length="97" mass="10991">MEVTDVRLRRVNTEGRMRAIASITLDHEFVVHDIRVIDGNNGLFVAMPSKRTPDGEFRDIAHPINSNTRSKIQDAVLTEYHRLGELEEVEFEEAGAS</sequence>
<protein>
    <recommendedName>
        <fullName evidence="1">Putative septation protein SpoVG</fullName>
    </recommendedName>
    <alternativeName>
        <fullName evidence="1">Stage V sporulation protein G</fullName>
    </alternativeName>
</protein>
<name>SP5G_BACCN</name>
<proteinExistence type="inferred from homology"/>
<accession>A7GJW0</accession>
<keyword id="KW-0131">Cell cycle</keyword>
<keyword id="KW-0132">Cell division</keyword>
<keyword id="KW-0717">Septation</keyword>
<keyword id="KW-0749">Sporulation</keyword>
<reference key="1">
    <citation type="journal article" date="2008" name="Chem. Biol. Interact.">
        <title>Extending the Bacillus cereus group genomics to putative food-borne pathogens of different toxicity.</title>
        <authorList>
            <person name="Lapidus A."/>
            <person name="Goltsman E."/>
            <person name="Auger S."/>
            <person name="Galleron N."/>
            <person name="Segurens B."/>
            <person name="Dossat C."/>
            <person name="Land M.L."/>
            <person name="Broussolle V."/>
            <person name="Brillard J."/>
            <person name="Guinebretiere M.-H."/>
            <person name="Sanchis V."/>
            <person name="Nguen-the C."/>
            <person name="Lereclus D."/>
            <person name="Richardson P."/>
            <person name="Wincker P."/>
            <person name="Weissenbach J."/>
            <person name="Ehrlich S.D."/>
            <person name="Sorokin A."/>
        </authorList>
    </citation>
    <scope>NUCLEOTIDE SEQUENCE [LARGE SCALE GENOMIC DNA]</scope>
    <source>
        <strain>DSM 22905 / CIP 110041 / 391-98 / NVH 391-98</strain>
    </source>
</reference>